<gene>
    <name evidence="1" type="primary">ihfA</name>
    <name evidence="1" type="synonym">himA</name>
    <name type="ordered locus">Avi_1631</name>
</gene>
<proteinExistence type="inferred from homology"/>
<sequence>MAGKTVTRADLAESVFRKVGLSRTESAELVETVIDEICNAIVRGEMVKLSSFATFQVRAKNERIGRNPKTGEEVPISPRKVMTFKASNVLKQRILRSHLARKAKQKPANPAA</sequence>
<reference key="1">
    <citation type="journal article" date="2009" name="J. Bacteriol.">
        <title>Genome sequences of three Agrobacterium biovars help elucidate the evolution of multichromosome genomes in bacteria.</title>
        <authorList>
            <person name="Slater S.C."/>
            <person name="Goldman B.S."/>
            <person name="Goodner B."/>
            <person name="Setubal J.C."/>
            <person name="Farrand S.K."/>
            <person name="Nester E.W."/>
            <person name="Burr T.J."/>
            <person name="Banta L."/>
            <person name="Dickerman A.W."/>
            <person name="Paulsen I."/>
            <person name="Otten L."/>
            <person name="Suen G."/>
            <person name="Welch R."/>
            <person name="Almeida N.F."/>
            <person name="Arnold F."/>
            <person name="Burton O.T."/>
            <person name="Du Z."/>
            <person name="Ewing A."/>
            <person name="Godsy E."/>
            <person name="Heisel S."/>
            <person name="Houmiel K.L."/>
            <person name="Jhaveri J."/>
            <person name="Lu J."/>
            <person name="Miller N.M."/>
            <person name="Norton S."/>
            <person name="Chen Q."/>
            <person name="Phoolcharoen W."/>
            <person name="Ohlin V."/>
            <person name="Ondrusek D."/>
            <person name="Pride N."/>
            <person name="Stricklin S.L."/>
            <person name="Sun J."/>
            <person name="Wheeler C."/>
            <person name="Wilson L."/>
            <person name="Zhu H."/>
            <person name="Wood D.W."/>
        </authorList>
    </citation>
    <scope>NUCLEOTIDE SEQUENCE [LARGE SCALE GENOMIC DNA]</scope>
    <source>
        <strain>ATCC BAA-846 / DSM 112012 / S4</strain>
    </source>
</reference>
<dbReference type="EMBL" id="CP000633">
    <property type="protein sequence ID" value="ACM36168.1"/>
    <property type="molecule type" value="Genomic_DNA"/>
</dbReference>
<dbReference type="RefSeq" id="WP_015915592.1">
    <property type="nucleotide sequence ID" value="NC_011989.1"/>
</dbReference>
<dbReference type="SMR" id="B9JV88"/>
<dbReference type="STRING" id="311402.Avi_1631"/>
<dbReference type="KEGG" id="avi:Avi_1631"/>
<dbReference type="eggNOG" id="COG0776">
    <property type="taxonomic scope" value="Bacteria"/>
</dbReference>
<dbReference type="HOGENOM" id="CLU_105066_1_1_5"/>
<dbReference type="Proteomes" id="UP000001596">
    <property type="component" value="Chromosome 1"/>
</dbReference>
<dbReference type="GO" id="GO:0005829">
    <property type="term" value="C:cytosol"/>
    <property type="evidence" value="ECO:0007669"/>
    <property type="project" value="TreeGrafter"/>
</dbReference>
<dbReference type="GO" id="GO:0003677">
    <property type="term" value="F:DNA binding"/>
    <property type="evidence" value="ECO:0007669"/>
    <property type="project" value="UniProtKB-UniRule"/>
</dbReference>
<dbReference type="GO" id="GO:0030527">
    <property type="term" value="F:structural constituent of chromatin"/>
    <property type="evidence" value="ECO:0007669"/>
    <property type="project" value="InterPro"/>
</dbReference>
<dbReference type="GO" id="GO:0006310">
    <property type="term" value="P:DNA recombination"/>
    <property type="evidence" value="ECO:0007669"/>
    <property type="project" value="UniProtKB-UniRule"/>
</dbReference>
<dbReference type="GO" id="GO:0009893">
    <property type="term" value="P:positive regulation of metabolic process"/>
    <property type="evidence" value="ECO:0007669"/>
    <property type="project" value="UniProtKB-ARBA"/>
</dbReference>
<dbReference type="GO" id="GO:0006355">
    <property type="term" value="P:regulation of DNA-templated transcription"/>
    <property type="evidence" value="ECO:0007669"/>
    <property type="project" value="UniProtKB-UniRule"/>
</dbReference>
<dbReference type="GO" id="GO:0006417">
    <property type="term" value="P:regulation of translation"/>
    <property type="evidence" value="ECO:0007669"/>
    <property type="project" value="UniProtKB-UniRule"/>
</dbReference>
<dbReference type="CDD" id="cd13835">
    <property type="entry name" value="IHF_A"/>
    <property type="match status" value="1"/>
</dbReference>
<dbReference type="Gene3D" id="4.10.520.10">
    <property type="entry name" value="IHF-like DNA-binding proteins"/>
    <property type="match status" value="1"/>
</dbReference>
<dbReference type="HAMAP" id="MF_00380">
    <property type="entry name" value="IHF_alpha"/>
    <property type="match status" value="1"/>
</dbReference>
<dbReference type="InterPro" id="IPR000119">
    <property type="entry name" value="Hist_DNA-bd"/>
</dbReference>
<dbReference type="InterPro" id="IPR020816">
    <property type="entry name" value="Histone-like_DNA-bd_CS"/>
</dbReference>
<dbReference type="InterPro" id="IPR010992">
    <property type="entry name" value="IHF-like_DNA-bd_dom_sf"/>
</dbReference>
<dbReference type="InterPro" id="IPR005684">
    <property type="entry name" value="IHF_alpha"/>
</dbReference>
<dbReference type="NCBIfam" id="TIGR00987">
    <property type="entry name" value="himA"/>
    <property type="match status" value="1"/>
</dbReference>
<dbReference type="NCBIfam" id="NF001401">
    <property type="entry name" value="PRK00285.1"/>
    <property type="match status" value="1"/>
</dbReference>
<dbReference type="PANTHER" id="PTHR33175">
    <property type="entry name" value="DNA-BINDING PROTEIN HU"/>
    <property type="match status" value="1"/>
</dbReference>
<dbReference type="PANTHER" id="PTHR33175:SF2">
    <property type="entry name" value="INTEGRATION HOST FACTOR SUBUNIT ALPHA"/>
    <property type="match status" value="1"/>
</dbReference>
<dbReference type="Pfam" id="PF00216">
    <property type="entry name" value="Bac_DNA_binding"/>
    <property type="match status" value="1"/>
</dbReference>
<dbReference type="PRINTS" id="PR01727">
    <property type="entry name" value="DNABINDINGHU"/>
</dbReference>
<dbReference type="SMART" id="SM00411">
    <property type="entry name" value="BHL"/>
    <property type="match status" value="1"/>
</dbReference>
<dbReference type="SUPFAM" id="SSF47729">
    <property type="entry name" value="IHF-like DNA-binding proteins"/>
    <property type="match status" value="1"/>
</dbReference>
<dbReference type="PROSITE" id="PS00045">
    <property type="entry name" value="HISTONE_LIKE"/>
    <property type="match status" value="1"/>
</dbReference>
<comment type="function">
    <text evidence="1">This protein is one of the two subunits of integration host factor, a specific DNA-binding protein that functions in genetic recombination as well as in transcriptional and translational control.</text>
</comment>
<comment type="subunit">
    <text evidence="1">Heterodimer of an alpha and a beta chain.</text>
</comment>
<comment type="similarity">
    <text evidence="1">Belongs to the bacterial histone-like protein family.</text>
</comment>
<accession>B9JV88</accession>
<feature type="chain" id="PRO_1000190416" description="Integration host factor subunit alpha">
    <location>
        <begin position="1"/>
        <end position="112"/>
    </location>
</feature>
<evidence type="ECO:0000255" key="1">
    <source>
        <dbReference type="HAMAP-Rule" id="MF_00380"/>
    </source>
</evidence>
<name>IHFA_ALLAM</name>
<keyword id="KW-0233">DNA recombination</keyword>
<keyword id="KW-0238">DNA-binding</keyword>
<keyword id="KW-1185">Reference proteome</keyword>
<keyword id="KW-0804">Transcription</keyword>
<keyword id="KW-0805">Transcription regulation</keyword>
<keyword id="KW-0810">Translation regulation</keyword>
<protein>
    <recommendedName>
        <fullName evidence="1">Integration host factor subunit alpha</fullName>
        <shortName evidence="1">IHF-alpha</shortName>
    </recommendedName>
</protein>
<organism>
    <name type="scientific">Allorhizobium ampelinum (strain ATCC BAA-846 / DSM 112012 / S4)</name>
    <name type="common">Agrobacterium vitis (strain S4)</name>
    <dbReference type="NCBI Taxonomy" id="311402"/>
    <lineage>
        <taxon>Bacteria</taxon>
        <taxon>Pseudomonadati</taxon>
        <taxon>Pseudomonadota</taxon>
        <taxon>Alphaproteobacteria</taxon>
        <taxon>Hyphomicrobiales</taxon>
        <taxon>Rhizobiaceae</taxon>
        <taxon>Rhizobium/Agrobacterium group</taxon>
        <taxon>Allorhizobium</taxon>
        <taxon>Allorhizobium ampelinum</taxon>
    </lineage>
</organism>